<comment type="function">
    <text evidence="1">This enzyme scavenges exogenous and endogenous cytidine and 2'-deoxycytidine for UMP synthesis.</text>
</comment>
<comment type="catalytic activity">
    <reaction evidence="1">
        <text>cytidine + H2O + H(+) = uridine + NH4(+)</text>
        <dbReference type="Rhea" id="RHEA:16069"/>
        <dbReference type="ChEBI" id="CHEBI:15377"/>
        <dbReference type="ChEBI" id="CHEBI:15378"/>
        <dbReference type="ChEBI" id="CHEBI:16704"/>
        <dbReference type="ChEBI" id="CHEBI:17562"/>
        <dbReference type="ChEBI" id="CHEBI:28938"/>
        <dbReference type="EC" id="3.5.4.5"/>
    </reaction>
</comment>
<comment type="catalytic activity">
    <reaction evidence="1">
        <text>2'-deoxycytidine + H2O + H(+) = 2'-deoxyuridine + NH4(+)</text>
        <dbReference type="Rhea" id="RHEA:13433"/>
        <dbReference type="ChEBI" id="CHEBI:15377"/>
        <dbReference type="ChEBI" id="CHEBI:15378"/>
        <dbReference type="ChEBI" id="CHEBI:15698"/>
        <dbReference type="ChEBI" id="CHEBI:16450"/>
        <dbReference type="ChEBI" id="CHEBI:28938"/>
        <dbReference type="EC" id="3.5.4.5"/>
    </reaction>
</comment>
<comment type="cofactor">
    <cofactor evidence="1">
        <name>Zn(2+)</name>
        <dbReference type="ChEBI" id="CHEBI:29105"/>
    </cofactor>
    <text evidence="1">Binds 1 zinc ion.</text>
</comment>
<comment type="subunit">
    <text evidence="1">Homodimer.</text>
</comment>
<comment type="similarity">
    <text evidence="1">Belongs to the cytidine and deoxycytidylate deaminase family.</text>
</comment>
<keyword id="KW-0378">Hydrolase</keyword>
<keyword id="KW-0479">Metal-binding</keyword>
<keyword id="KW-0862">Zinc</keyword>
<proteinExistence type="inferred from homology"/>
<reference key="1">
    <citation type="journal article" date="2008" name="PLoS ONE">
        <title>A recalibrated molecular clock and independent origins for the cholera pandemic clones.</title>
        <authorList>
            <person name="Feng L."/>
            <person name="Reeves P.R."/>
            <person name="Lan R."/>
            <person name="Ren Y."/>
            <person name="Gao C."/>
            <person name="Zhou Z."/>
            <person name="Ren Y."/>
            <person name="Cheng J."/>
            <person name="Wang W."/>
            <person name="Wang J."/>
            <person name="Qian W."/>
            <person name="Li D."/>
            <person name="Wang L."/>
        </authorList>
    </citation>
    <scope>NUCLEOTIDE SEQUENCE [LARGE SCALE GENOMIC DNA]</scope>
    <source>
        <strain>M66-2</strain>
    </source>
</reference>
<organism>
    <name type="scientific">Vibrio cholerae serotype O1 (strain M66-2)</name>
    <dbReference type="NCBI Taxonomy" id="579112"/>
    <lineage>
        <taxon>Bacteria</taxon>
        <taxon>Pseudomonadati</taxon>
        <taxon>Pseudomonadota</taxon>
        <taxon>Gammaproteobacteria</taxon>
        <taxon>Vibrionales</taxon>
        <taxon>Vibrionaceae</taxon>
        <taxon>Vibrio</taxon>
    </lineage>
</organism>
<feature type="chain" id="PRO_1000185419" description="Cytidine deaminase">
    <location>
        <begin position="1"/>
        <end position="295"/>
    </location>
</feature>
<feature type="domain" description="CMP/dCMP-type deaminase 1" evidence="2">
    <location>
        <begin position="48"/>
        <end position="168"/>
    </location>
</feature>
<feature type="domain" description="CMP/dCMP-type deaminase 2" evidence="2">
    <location>
        <begin position="187"/>
        <end position="295"/>
    </location>
</feature>
<feature type="active site" description="Proton donor" evidence="1">
    <location>
        <position position="104"/>
    </location>
</feature>
<feature type="binding site" evidence="1">
    <location>
        <begin position="89"/>
        <end position="91"/>
    </location>
    <ligand>
        <name>substrate</name>
    </ligand>
</feature>
<feature type="binding site" evidence="1">
    <location>
        <position position="102"/>
    </location>
    <ligand>
        <name>Zn(2+)</name>
        <dbReference type="ChEBI" id="CHEBI:29105"/>
        <note>catalytic</note>
    </ligand>
</feature>
<feature type="binding site" evidence="1">
    <location>
        <position position="129"/>
    </location>
    <ligand>
        <name>Zn(2+)</name>
        <dbReference type="ChEBI" id="CHEBI:29105"/>
        <note>catalytic</note>
    </ligand>
</feature>
<feature type="binding site" evidence="1">
    <location>
        <position position="132"/>
    </location>
    <ligand>
        <name>Zn(2+)</name>
        <dbReference type="ChEBI" id="CHEBI:29105"/>
        <note>catalytic</note>
    </ligand>
</feature>
<evidence type="ECO:0000255" key="1">
    <source>
        <dbReference type="HAMAP-Rule" id="MF_01558"/>
    </source>
</evidence>
<evidence type="ECO:0000255" key="2">
    <source>
        <dbReference type="PROSITE-ProRule" id="PRU01083"/>
    </source>
</evidence>
<accession>C3LLS7</accession>
<sequence>MRNRIEQALQQMPASFAPYLRELVLAKDFDATFSAEQYQQLLTLSGLEDADLRVALLPIAAAYSYAPISEFYVGAIVRGISGRLYLGANMEFTGAQLGQTVHAEQCAISHAWMKGEKGVADITINFSPCGHCRQFMNELTTASSLKIQLPKRAAKTLQEYLPESFGPADLGIDSGLMSPVNHGKTSDDDEELIQQALRAMNISHSPYTQNFSGVALKMRSGAIYLGAYAENAAFNPSLPPLQVALAQAMMMGESFEDIEAAALVESATGKISHLADTQATLEVINPDIPLSYLSL</sequence>
<dbReference type="EC" id="3.5.4.5" evidence="1"/>
<dbReference type="EMBL" id="CP001233">
    <property type="protein sequence ID" value="ACP05503.1"/>
    <property type="molecule type" value="Genomic_DNA"/>
</dbReference>
<dbReference type="RefSeq" id="WP_001245905.1">
    <property type="nucleotide sequence ID" value="NC_012578.1"/>
</dbReference>
<dbReference type="SMR" id="C3LLS7"/>
<dbReference type="GeneID" id="89514198"/>
<dbReference type="KEGG" id="vcm:VCM66_1186"/>
<dbReference type="HOGENOM" id="CLU_052424_0_0_6"/>
<dbReference type="Proteomes" id="UP000001217">
    <property type="component" value="Chromosome I"/>
</dbReference>
<dbReference type="GO" id="GO:0005829">
    <property type="term" value="C:cytosol"/>
    <property type="evidence" value="ECO:0007669"/>
    <property type="project" value="TreeGrafter"/>
</dbReference>
<dbReference type="GO" id="GO:0004126">
    <property type="term" value="F:cytidine deaminase activity"/>
    <property type="evidence" value="ECO:0007669"/>
    <property type="project" value="UniProtKB-UniRule"/>
</dbReference>
<dbReference type="GO" id="GO:0042802">
    <property type="term" value="F:identical protein binding"/>
    <property type="evidence" value="ECO:0007669"/>
    <property type="project" value="UniProtKB-ARBA"/>
</dbReference>
<dbReference type="GO" id="GO:0008270">
    <property type="term" value="F:zinc ion binding"/>
    <property type="evidence" value="ECO:0007669"/>
    <property type="project" value="UniProtKB-UniRule"/>
</dbReference>
<dbReference type="GO" id="GO:0009972">
    <property type="term" value="P:cytidine deamination"/>
    <property type="evidence" value="ECO:0007669"/>
    <property type="project" value="InterPro"/>
</dbReference>
<dbReference type="CDD" id="cd01283">
    <property type="entry name" value="cytidine_deaminase"/>
    <property type="match status" value="2"/>
</dbReference>
<dbReference type="FunFam" id="3.40.140.10:FF:000007">
    <property type="entry name" value="Cytidine deaminase"/>
    <property type="match status" value="1"/>
</dbReference>
<dbReference type="Gene3D" id="3.40.140.10">
    <property type="entry name" value="Cytidine Deaminase, domain 2"/>
    <property type="match status" value="2"/>
</dbReference>
<dbReference type="HAMAP" id="MF_01558">
    <property type="entry name" value="Cyt_deam"/>
    <property type="match status" value="1"/>
</dbReference>
<dbReference type="InterPro" id="IPR016192">
    <property type="entry name" value="APOBEC/CMP_deaminase_Zn-bd"/>
</dbReference>
<dbReference type="InterPro" id="IPR002125">
    <property type="entry name" value="CMP_dCMP_dom"/>
</dbReference>
<dbReference type="InterPro" id="IPR013171">
    <property type="entry name" value="Cyd/dCyd_deaminase_Zn-bd"/>
</dbReference>
<dbReference type="InterPro" id="IPR050202">
    <property type="entry name" value="Cyt/Deoxycyt_deaminase"/>
</dbReference>
<dbReference type="InterPro" id="IPR006263">
    <property type="entry name" value="Cyt_deam_dimer"/>
</dbReference>
<dbReference type="InterPro" id="IPR016193">
    <property type="entry name" value="Cytidine_deaminase-like"/>
</dbReference>
<dbReference type="InterPro" id="IPR020797">
    <property type="entry name" value="Cytidine_deaminase_bacteria"/>
</dbReference>
<dbReference type="NCBIfam" id="TIGR01355">
    <property type="entry name" value="cyt_deam_dimer"/>
    <property type="match status" value="1"/>
</dbReference>
<dbReference type="NCBIfam" id="NF006537">
    <property type="entry name" value="PRK09027.1"/>
    <property type="match status" value="1"/>
</dbReference>
<dbReference type="PANTHER" id="PTHR11644">
    <property type="entry name" value="CYTIDINE DEAMINASE"/>
    <property type="match status" value="1"/>
</dbReference>
<dbReference type="PANTHER" id="PTHR11644:SF2">
    <property type="entry name" value="CYTIDINE DEAMINASE"/>
    <property type="match status" value="1"/>
</dbReference>
<dbReference type="Pfam" id="PF00383">
    <property type="entry name" value="dCMP_cyt_deam_1"/>
    <property type="match status" value="1"/>
</dbReference>
<dbReference type="Pfam" id="PF08211">
    <property type="entry name" value="dCMP_cyt_deam_2"/>
    <property type="match status" value="1"/>
</dbReference>
<dbReference type="PIRSF" id="PIRSF006334">
    <property type="entry name" value="Cdd_plus_pseudo"/>
    <property type="match status" value="1"/>
</dbReference>
<dbReference type="SUPFAM" id="SSF53927">
    <property type="entry name" value="Cytidine deaminase-like"/>
    <property type="match status" value="2"/>
</dbReference>
<dbReference type="PROSITE" id="PS00903">
    <property type="entry name" value="CYT_DCMP_DEAMINASES_1"/>
    <property type="match status" value="1"/>
</dbReference>
<dbReference type="PROSITE" id="PS51747">
    <property type="entry name" value="CYT_DCMP_DEAMINASES_2"/>
    <property type="match status" value="2"/>
</dbReference>
<protein>
    <recommendedName>
        <fullName evidence="1">Cytidine deaminase</fullName>
        <ecNumber evidence="1">3.5.4.5</ecNumber>
    </recommendedName>
    <alternativeName>
        <fullName evidence="1">Cytidine aminohydrolase</fullName>
        <shortName evidence="1">CDA</shortName>
    </alternativeName>
</protein>
<gene>
    <name evidence="1" type="primary">cdd</name>
    <name type="ordered locus">VCM66_1186</name>
</gene>
<name>CDD_VIBCM</name>